<proteinExistence type="evidence at transcript level"/>
<reference key="1">
    <citation type="submission" date="1997-11" db="EMBL/GenBank/DDBJ databases">
        <authorList>
            <person name="Khanum A."/>
            <person name="Tsai-Morris C.-H."/>
            <person name="Dufau M.L."/>
        </authorList>
    </citation>
    <scope>NUCLEOTIDE SEQUENCE [MRNA]</scope>
</reference>
<evidence type="ECO:0000250" key="1"/>
<evidence type="ECO:0000250" key="2">
    <source>
        <dbReference type="UniProtKB" id="P37058"/>
    </source>
</evidence>
<evidence type="ECO:0000250" key="3">
    <source>
        <dbReference type="UniProtKB" id="P70385"/>
    </source>
</evidence>
<evidence type="ECO:0000305" key="4"/>
<evidence type="ECO:0000312" key="5">
    <source>
        <dbReference type="RGD" id="621805"/>
    </source>
</evidence>
<feature type="chain" id="PRO_0000054575" description="17-beta-hydroxysteroid dehydrogenase type 3">
    <location>
        <begin position="1"/>
        <end position="306"/>
    </location>
</feature>
<feature type="active site" description="Proton acceptor" evidence="1">
    <location>
        <position position="194"/>
    </location>
</feature>
<feature type="binding site" evidence="1">
    <location>
        <begin position="44"/>
        <end position="73"/>
    </location>
    <ligand>
        <name>NADP(+)</name>
        <dbReference type="ChEBI" id="CHEBI:58349"/>
    </ligand>
</feature>
<feature type="binding site" evidence="1">
    <location>
        <position position="181"/>
    </location>
    <ligand>
        <name>substrate</name>
    </ligand>
</feature>
<name>DHB3_RAT</name>
<comment type="function">
    <text evidence="2 3">Catalyzes the conversion of 17-oxosteroids to 17beta-hydroxysteroids. Favors the reduction of androstenedione to testosterone. Testosterone is the key androgen driving male development and function (By similarity). Uses NADPH while the two other EDH17B enzymes use NADH. Androgens such as epiandrosterone, dehydroepiandrosterone, androsterone and androstanedione are accepted as substrates and reduced at C-17. Can reduce 11-ketoandrostenedione as well as 11beta-hydroxyandrostenedione at C-17 to the respective testosterone forms (By similarity). Plays a role in the rate-limiting-step for the maximum level of testosterone production by the testis but does not affect basal testosterone production (By similarity).</text>
</comment>
<comment type="catalytic activity">
    <reaction evidence="2">
        <text>a 17beta-hydroxy steroid + NADP(+) = a 17-oxo steroid + NADPH + H(+)</text>
        <dbReference type="Rhea" id="RHEA:69284"/>
        <dbReference type="ChEBI" id="CHEBI:15378"/>
        <dbReference type="ChEBI" id="CHEBI:19168"/>
        <dbReference type="ChEBI" id="CHEBI:35343"/>
        <dbReference type="ChEBI" id="CHEBI:57783"/>
        <dbReference type="ChEBI" id="CHEBI:58349"/>
    </reaction>
    <physiologicalReaction direction="right-to-left" evidence="2">
        <dbReference type="Rhea" id="RHEA:69286"/>
    </physiologicalReaction>
</comment>
<comment type="catalytic activity">
    <reaction evidence="2">
        <text>testosterone + NADP(+) = androst-4-ene-3,17-dione + NADPH + H(+)</text>
        <dbReference type="Rhea" id="RHEA:14981"/>
        <dbReference type="ChEBI" id="CHEBI:15378"/>
        <dbReference type="ChEBI" id="CHEBI:16422"/>
        <dbReference type="ChEBI" id="CHEBI:17347"/>
        <dbReference type="ChEBI" id="CHEBI:57783"/>
        <dbReference type="ChEBI" id="CHEBI:58349"/>
        <dbReference type="EC" id="1.1.1.64"/>
    </reaction>
    <physiologicalReaction direction="right-to-left" evidence="2">
        <dbReference type="Rhea" id="RHEA:14983"/>
    </physiologicalReaction>
</comment>
<comment type="catalytic activity">
    <reaction evidence="2">
        <text>17beta-estradiol + NADP(+) = estrone + NADPH + H(+)</text>
        <dbReference type="Rhea" id="RHEA:24616"/>
        <dbReference type="ChEBI" id="CHEBI:15378"/>
        <dbReference type="ChEBI" id="CHEBI:16469"/>
        <dbReference type="ChEBI" id="CHEBI:17263"/>
        <dbReference type="ChEBI" id="CHEBI:57783"/>
        <dbReference type="ChEBI" id="CHEBI:58349"/>
        <dbReference type="EC" id="1.1.1.62"/>
    </reaction>
    <physiologicalReaction direction="right-to-left" evidence="2">
        <dbReference type="Rhea" id="RHEA:24618"/>
    </physiologicalReaction>
</comment>
<comment type="catalytic activity">
    <reaction evidence="2">
        <text>3beta-hydroxyandrost-5-en-17-one + NADPH + H(+) = androst-5-en-3beta,17beta-diol + NADP(+)</text>
        <dbReference type="Rhea" id="RHEA:46628"/>
        <dbReference type="ChEBI" id="CHEBI:2710"/>
        <dbReference type="ChEBI" id="CHEBI:15378"/>
        <dbReference type="ChEBI" id="CHEBI:28689"/>
        <dbReference type="ChEBI" id="CHEBI:57783"/>
        <dbReference type="ChEBI" id="CHEBI:58349"/>
    </reaction>
    <physiologicalReaction direction="left-to-right" evidence="2">
        <dbReference type="Rhea" id="RHEA:46629"/>
    </physiologicalReaction>
</comment>
<comment type="catalytic activity">
    <reaction evidence="2">
        <text>17beta-hydroxy-5alpha-androstan-3-one + NADP(+) = 5alpha-androstan-3,17-dione + NADPH + H(+)</text>
        <dbReference type="Rhea" id="RHEA:42120"/>
        <dbReference type="ChEBI" id="CHEBI:15378"/>
        <dbReference type="ChEBI" id="CHEBI:15994"/>
        <dbReference type="ChEBI" id="CHEBI:16330"/>
        <dbReference type="ChEBI" id="CHEBI:57783"/>
        <dbReference type="ChEBI" id="CHEBI:58349"/>
    </reaction>
    <physiologicalReaction direction="right-to-left" evidence="2">
        <dbReference type="Rhea" id="RHEA:42122"/>
    </physiologicalReaction>
</comment>
<comment type="catalytic activity">
    <reaction evidence="2">
        <text>androsterone + NADPH + H(+) = 5alpha-androstane-3alpha,17beta-diol + NADP(+)</text>
        <dbReference type="Rhea" id="RHEA:42156"/>
        <dbReference type="ChEBI" id="CHEBI:15378"/>
        <dbReference type="ChEBI" id="CHEBI:16032"/>
        <dbReference type="ChEBI" id="CHEBI:36713"/>
        <dbReference type="ChEBI" id="CHEBI:57783"/>
        <dbReference type="ChEBI" id="CHEBI:58349"/>
    </reaction>
    <physiologicalReaction direction="left-to-right" evidence="2">
        <dbReference type="Rhea" id="RHEA:42157"/>
    </physiologicalReaction>
</comment>
<comment type="catalytic activity">
    <reaction evidence="2">
        <text>3beta-hydroxy-5alpha-androstan-17-one + NADPH + H(+) = 5alpha-androstane-3beta,17beta-diol + NADP(+)</text>
        <dbReference type="Rhea" id="RHEA:53480"/>
        <dbReference type="ChEBI" id="CHEBI:15378"/>
        <dbReference type="ChEBI" id="CHEBI:18329"/>
        <dbReference type="ChEBI" id="CHEBI:57783"/>
        <dbReference type="ChEBI" id="CHEBI:58349"/>
        <dbReference type="ChEBI" id="CHEBI:541975"/>
    </reaction>
    <physiologicalReaction direction="left-to-right" evidence="2">
        <dbReference type="Rhea" id="RHEA:53481"/>
    </physiologicalReaction>
</comment>
<comment type="catalytic activity">
    <reaction evidence="2">
        <text>androst-4-ene-3,11,17-trione + NADPH + H(+) = 17beta-hydroxyandrost-4-ene-3,11-dione + NADP(+)</text>
        <dbReference type="Rhea" id="RHEA:53484"/>
        <dbReference type="ChEBI" id="CHEBI:2495"/>
        <dbReference type="ChEBI" id="CHEBI:15378"/>
        <dbReference type="ChEBI" id="CHEBI:34133"/>
        <dbReference type="ChEBI" id="CHEBI:57783"/>
        <dbReference type="ChEBI" id="CHEBI:58349"/>
    </reaction>
    <physiologicalReaction direction="left-to-right" evidence="2">
        <dbReference type="Rhea" id="RHEA:53485"/>
    </physiologicalReaction>
</comment>
<comment type="catalytic activity">
    <reaction evidence="2">
        <text>11beta-hydroxyandrost-4-ene-3,17-dione + NADPH + H(+) = 11beta,17beta-dihydroxyandrost-4-ene-3-one + NADP(+)</text>
        <dbReference type="Rhea" id="RHEA:53488"/>
        <dbReference type="ChEBI" id="CHEBI:15378"/>
        <dbReference type="ChEBI" id="CHEBI:27967"/>
        <dbReference type="ChEBI" id="CHEBI:57783"/>
        <dbReference type="ChEBI" id="CHEBI:58349"/>
        <dbReference type="ChEBI" id="CHEBI:81481"/>
    </reaction>
    <physiologicalReaction direction="left-to-right" evidence="2">
        <dbReference type="Rhea" id="RHEA:53489"/>
    </physiologicalReaction>
</comment>
<comment type="pathway">
    <text evidence="2">Hormone biosynthesis; testosterone biosynthesis.</text>
</comment>
<comment type="pathway">
    <text evidence="2">Steroid metabolism.</text>
</comment>
<comment type="subcellular location">
    <subcellularLocation>
        <location evidence="2">Endoplasmic reticulum</location>
    </subcellularLocation>
</comment>
<comment type="similarity">
    <text evidence="4">Belongs to the short-chain dehydrogenases/reductases (SDR) family. 17-beta-HSD 3 subfamily.</text>
</comment>
<dbReference type="EC" id="1.1.1.62" evidence="2"/>
<dbReference type="EC" id="1.1.1.64" evidence="2"/>
<dbReference type="EMBL" id="AF035156">
    <property type="protein sequence ID" value="AAB99739.1"/>
    <property type="molecule type" value="mRNA"/>
</dbReference>
<dbReference type="RefSeq" id="NP_446459.1">
    <property type="nucleotide sequence ID" value="NM_054007.1"/>
</dbReference>
<dbReference type="SMR" id="O54939"/>
<dbReference type="FunCoup" id="O54939">
    <property type="interactions" value="75"/>
</dbReference>
<dbReference type="STRING" id="10116.ENSRNOP00000025850"/>
<dbReference type="BindingDB" id="O54939"/>
<dbReference type="ChEMBL" id="CHEMBL1075158"/>
<dbReference type="DrugCentral" id="O54939"/>
<dbReference type="iPTMnet" id="O54939"/>
<dbReference type="PhosphoSitePlus" id="O54939"/>
<dbReference type="PaxDb" id="10116-ENSRNOP00000025850"/>
<dbReference type="GeneID" id="117182"/>
<dbReference type="KEGG" id="rno:117182"/>
<dbReference type="UCSC" id="RGD:621805">
    <property type="organism name" value="rat"/>
</dbReference>
<dbReference type="AGR" id="RGD:621805"/>
<dbReference type="CTD" id="3293"/>
<dbReference type="RGD" id="621805">
    <property type="gene designation" value="Hsd17b3"/>
</dbReference>
<dbReference type="eggNOG" id="KOG1014">
    <property type="taxonomic scope" value="Eukaryota"/>
</dbReference>
<dbReference type="InParanoid" id="O54939"/>
<dbReference type="OrthoDB" id="53504at9989"/>
<dbReference type="PhylomeDB" id="O54939"/>
<dbReference type="BRENDA" id="1.1.1.51">
    <property type="organism ID" value="5301"/>
</dbReference>
<dbReference type="BRENDA" id="1.1.1.64">
    <property type="organism ID" value="5301"/>
</dbReference>
<dbReference type="Reactome" id="R-RNO-193048">
    <property type="pathway name" value="Androgen biosynthesis"/>
</dbReference>
<dbReference type="Reactome" id="R-RNO-75876">
    <property type="pathway name" value="Synthesis of very long-chain fatty acyl-CoAs"/>
</dbReference>
<dbReference type="UniPathway" id="UPA00367"/>
<dbReference type="PRO" id="PR:O54939"/>
<dbReference type="Proteomes" id="UP000002494">
    <property type="component" value="Unplaced"/>
</dbReference>
<dbReference type="GO" id="GO:0005783">
    <property type="term" value="C:endoplasmic reticulum"/>
    <property type="evidence" value="ECO:0000250"/>
    <property type="project" value="UniProtKB"/>
</dbReference>
<dbReference type="GO" id="GO:0005789">
    <property type="term" value="C:endoplasmic reticulum membrane"/>
    <property type="evidence" value="ECO:0000266"/>
    <property type="project" value="RGD"/>
</dbReference>
<dbReference type="GO" id="GO:0004303">
    <property type="term" value="F:estradiol 17-beta-dehydrogenase [NAD(P)+] activity"/>
    <property type="evidence" value="ECO:0000314"/>
    <property type="project" value="RGD"/>
</dbReference>
<dbReference type="GO" id="GO:0047045">
    <property type="term" value="F:testosterone 17-beta-dehydrogenase (NADP+) activity"/>
    <property type="evidence" value="ECO:0000250"/>
    <property type="project" value="UniProtKB"/>
</dbReference>
<dbReference type="GO" id="GO:0047035">
    <property type="term" value="F:testosterone dehydrogenase (NAD+) activity"/>
    <property type="evidence" value="ECO:0000314"/>
    <property type="project" value="RGD"/>
</dbReference>
<dbReference type="GO" id="GO:0030283">
    <property type="term" value="F:testosterone dehydrogenase [NAD(P)+] activity"/>
    <property type="evidence" value="ECO:0000266"/>
    <property type="project" value="RGD"/>
</dbReference>
<dbReference type="GO" id="GO:0006702">
    <property type="term" value="P:androgen biosynthetic process"/>
    <property type="evidence" value="ECO:0000266"/>
    <property type="project" value="RGD"/>
</dbReference>
<dbReference type="GO" id="GO:0018879">
    <property type="term" value="P:biphenyl metabolic process"/>
    <property type="evidence" value="ECO:0000270"/>
    <property type="project" value="RGD"/>
</dbReference>
<dbReference type="GO" id="GO:0071236">
    <property type="term" value="P:cellular response to antibiotic"/>
    <property type="evidence" value="ECO:0000270"/>
    <property type="project" value="RGD"/>
</dbReference>
<dbReference type="GO" id="GO:0071371">
    <property type="term" value="P:cellular response to gonadotropin stimulus"/>
    <property type="evidence" value="ECO:0000270"/>
    <property type="project" value="RGD"/>
</dbReference>
<dbReference type="GO" id="GO:0032870">
    <property type="term" value="P:cellular response to hormone stimulus"/>
    <property type="evidence" value="ECO:0000270"/>
    <property type="project" value="RGD"/>
</dbReference>
<dbReference type="GO" id="GO:0021766">
    <property type="term" value="P:hippocampus development"/>
    <property type="evidence" value="ECO:0000270"/>
    <property type="project" value="RGD"/>
</dbReference>
<dbReference type="GO" id="GO:0033327">
    <property type="term" value="P:Leydig cell differentiation"/>
    <property type="evidence" value="ECO:0000270"/>
    <property type="project" value="RGD"/>
</dbReference>
<dbReference type="GO" id="GO:0006082">
    <property type="term" value="P:organic acid metabolic process"/>
    <property type="evidence" value="ECO:0000270"/>
    <property type="project" value="RGD"/>
</dbReference>
<dbReference type="GO" id="GO:0018958">
    <property type="term" value="P:phenol-containing compound metabolic process"/>
    <property type="evidence" value="ECO:0000270"/>
    <property type="project" value="RGD"/>
</dbReference>
<dbReference type="GO" id="GO:0014823">
    <property type="term" value="P:response to activity"/>
    <property type="evidence" value="ECO:0000270"/>
    <property type="project" value="RGD"/>
</dbReference>
<dbReference type="GO" id="GO:0046685">
    <property type="term" value="P:response to arsenic-containing substance"/>
    <property type="evidence" value="ECO:0000270"/>
    <property type="project" value="RGD"/>
</dbReference>
<dbReference type="GO" id="GO:0046686">
    <property type="term" value="P:response to cadmium ion"/>
    <property type="evidence" value="ECO:0000270"/>
    <property type="project" value="RGD"/>
</dbReference>
<dbReference type="GO" id="GO:0051412">
    <property type="term" value="P:response to corticosterone"/>
    <property type="evidence" value="ECO:0000270"/>
    <property type="project" value="RGD"/>
</dbReference>
<dbReference type="GO" id="GO:0043627">
    <property type="term" value="P:response to estrogen"/>
    <property type="evidence" value="ECO:0000270"/>
    <property type="project" value="RGD"/>
</dbReference>
<dbReference type="GO" id="GO:0045471">
    <property type="term" value="P:response to ethanol"/>
    <property type="evidence" value="ECO:0000270"/>
    <property type="project" value="RGD"/>
</dbReference>
<dbReference type="GO" id="GO:0070542">
    <property type="term" value="P:response to fatty acid"/>
    <property type="evidence" value="ECO:0000270"/>
    <property type="project" value="RGD"/>
</dbReference>
<dbReference type="GO" id="GO:0060992">
    <property type="term" value="P:response to fungicide"/>
    <property type="evidence" value="ECO:0000270"/>
    <property type="project" value="RGD"/>
</dbReference>
<dbReference type="GO" id="GO:0009635">
    <property type="term" value="P:response to herbicide"/>
    <property type="evidence" value="ECO:0000270"/>
    <property type="project" value="RGD"/>
</dbReference>
<dbReference type="GO" id="GO:0017085">
    <property type="term" value="P:response to insecticide"/>
    <property type="evidence" value="ECO:0000270"/>
    <property type="project" value="RGD"/>
</dbReference>
<dbReference type="GO" id="GO:0033591">
    <property type="term" value="P:response to L-ascorbic acid"/>
    <property type="evidence" value="ECO:0000270"/>
    <property type="project" value="RGD"/>
</dbReference>
<dbReference type="GO" id="GO:0010288">
    <property type="term" value="P:response to lead ion"/>
    <property type="evidence" value="ECO:0000270"/>
    <property type="project" value="RGD"/>
</dbReference>
<dbReference type="GO" id="GO:0010038">
    <property type="term" value="P:response to metal ion"/>
    <property type="evidence" value="ECO:0000270"/>
    <property type="project" value="RGD"/>
</dbReference>
<dbReference type="GO" id="GO:0031667">
    <property type="term" value="P:response to nutrient levels"/>
    <property type="evidence" value="ECO:0000270"/>
    <property type="project" value="RGD"/>
</dbReference>
<dbReference type="GO" id="GO:0048545">
    <property type="term" value="P:response to steroid hormone"/>
    <property type="evidence" value="ECO:0000270"/>
    <property type="project" value="RGD"/>
</dbReference>
<dbReference type="GO" id="GO:0033197">
    <property type="term" value="P:response to vitamin E"/>
    <property type="evidence" value="ECO:0000270"/>
    <property type="project" value="RGD"/>
</dbReference>
<dbReference type="GO" id="GO:0006694">
    <property type="term" value="P:steroid biosynthetic process"/>
    <property type="evidence" value="ECO:0000314"/>
    <property type="project" value="RGD"/>
</dbReference>
<dbReference type="GO" id="GO:0061370">
    <property type="term" value="P:testosterone biosynthetic process"/>
    <property type="evidence" value="ECO:0007669"/>
    <property type="project" value="UniProtKB-UniPathway"/>
</dbReference>
<dbReference type="CDD" id="cd05356">
    <property type="entry name" value="17beta-HSD1_like_SDR_c"/>
    <property type="match status" value="1"/>
</dbReference>
<dbReference type="FunFam" id="3.40.50.720:FF:000137">
    <property type="entry name" value="Hydroxysteroid (17-beta) dehydrogenase 3"/>
    <property type="match status" value="1"/>
</dbReference>
<dbReference type="Gene3D" id="3.40.50.720">
    <property type="entry name" value="NAD(P)-binding Rossmann-like Domain"/>
    <property type="match status" value="1"/>
</dbReference>
<dbReference type="InterPro" id="IPR036291">
    <property type="entry name" value="NAD(P)-bd_dom_sf"/>
</dbReference>
<dbReference type="InterPro" id="IPR002347">
    <property type="entry name" value="SDR_fam"/>
</dbReference>
<dbReference type="InterPro" id="IPR051019">
    <property type="entry name" value="VLCFA-Steroid_DH"/>
</dbReference>
<dbReference type="PANTHER" id="PTHR43899:SF7">
    <property type="entry name" value="17-BETA-HYDROXYSTEROID DEHYDROGENASE TYPE 3"/>
    <property type="match status" value="1"/>
</dbReference>
<dbReference type="PANTHER" id="PTHR43899">
    <property type="entry name" value="RH59310P"/>
    <property type="match status" value="1"/>
</dbReference>
<dbReference type="Pfam" id="PF00106">
    <property type="entry name" value="adh_short"/>
    <property type="match status" value="1"/>
</dbReference>
<dbReference type="PIRSF" id="PIRSF000126">
    <property type="entry name" value="11-beta-HSD1"/>
    <property type="match status" value="1"/>
</dbReference>
<dbReference type="PRINTS" id="PR00081">
    <property type="entry name" value="GDHRDH"/>
</dbReference>
<dbReference type="PRINTS" id="PR00080">
    <property type="entry name" value="SDRFAMILY"/>
</dbReference>
<dbReference type="SUPFAM" id="SSF51735">
    <property type="entry name" value="NAD(P)-binding Rossmann-fold domains"/>
    <property type="match status" value="1"/>
</dbReference>
<organism>
    <name type="scientific">Rattus norvegicus</name>
    <name type="common">Rat</name>
    <dbReference type="NCBI Taxonomy" id="10116"/>
    <lineage>
        <taxon>Eukaryota</taxon>
        <taxon>Metazoa</taxon>
        <taxon>Chordata</taxon>
        <taxon>Craniata</taxon>
        <taxon>Vertebrata</taxon>
        <taxon>Euteleostomi</taxon>
        <taxon>Mammalia</taxon>
        <taxon>Eutheria</taxon>
        <taxon>Euarchontoglires</taxon>
        <taxon>Glires</taxon>
        <taxon>Rodentia</taxon>
        <taxon>Myomorpha</taxon>
        <taxon>Muroidea</taxon>
        <taxon>Muridae</taxon>
        <taxon>Murinae</taxon>
        <taxon>Rattus</taxon>
    </lineage>
</organism>
<protein>
    <recommendedName>
        <fullName>17-beta-hydroxysteroid dehydrogenase type 3</fullName>
        <shortName>17-beta-HSD 3</shortName>
    </recommendedName>
    <alternativeName>
        <fullName>Estradiol 17-beta-dehydrogenase 2</fullName>
        <ecNumber evidence="2">1.1.1.62</ecNumber>
    </alternativeName>
    <alternativeName>
        <fullName>Testicular 17-beta-hydroxysteroid dehydrogenase</fullName>
    </alternativeName>
    <alternativeName>
        <fullName evidence="4">Testosterone 17-beta-dehydrogenase 3</fullName>
        <ecNumber evidence="2">1.1.1.64</ecNumber>
    </alternativeName>
</protein>
<gene>
    <name evidence="5" type="primary">Hsd17b3</name>
    <name type="synonym">Edh17b3</name>
</gene>
<sequence length="306" mass="34223">MEQFLLSVGLLVCLVCLVKCVRFSRYLFLSFCKALPGSFLRSMGQWAVITGAGDGIGKAYSFELARHGLNVVLISRTLEKLQVISEEIERTTGSRVKVVQADFTREDIYDHIEEQLKGLEIGVLVNNVGMLPNLLPSHFLSTSGESQSVIHCNITSVVKMTQLVLKHMESRRRGLILNISSGVGVRPWPLYSLYSASKAFVCTFSKALNVEYRDKGIIIQVLTPYSVSTPMTKYLNTSRVTKTADEFVKESLKYVTIGAETCGCLAHEILAIILNLIPSRIFYSSTTQRFLLKQFSDYLKSNISNR</sequence>
<accession>O54939</accession>
<keyword id="KW-0256">Endoplasmic reticulum</keyword>
<keyword id="KW-0444">Lipid biosynthesis</keyword>
<keyword id="KW-0443">Lipid metabolism</keyword>
<keyword id="KW-0521">NADP</keyword>
<keyword id="KW-0560">Oxidoreductase</keyword>
<keyword id="KW-1185">Reference proteome</keyword>
<keyword id="KW-0752">Steroid biosynthesis</keyword>